<protein>
    <recommendedName>
        <fullName evidence="1">Elongation factor P--(R)-beta-lysine ligase</fullName>
        <shortName evidence="1">EF-P--(R)-beta-lysine ligase</shortName>
        <ecNumber evidence="1">6.3.2.-</ecNumber>
    </recommendedName>
    <alternativeName>
        <fullName evidence="1">EF-P post-translational modification enzyme A</fullName>
    </alternativeName>
    <alternativeName>
        <fullName evidence="1">EF-P-lysine lysyltransferase</fullName>
    </alternativeName>
</protein>
<dbReference type="EC" id="6.3.2.-" evidence="1"/>
<dbReference type="EMBL" id="L42023">
    <property type="protein sequence ID" value="AAC22494.1"/>
    <property type="status" value="ALT_INIT"/>
    <property type="molecule type" value="Genomic_DNA"/>
</dbReference>
<dbReference type="PIR" id="I64097">
    <property type="entry name" value="I64097"/>
</dbReference>
<dbReference type="RefSeq" id="NP_438996.2">
    <property type="nucleotide sequence ID" value="NC_000907.1"/>
</dbReference>
<dbReference type="SMR" id="P43826"/>
<dbReference type="STRING" id="71421.HI_0836"/>
<dbReference type="EnsemblBacteria" id="AAC22494">
    <property type="protein sequence ID" value="AAC22494"/>
    <property type="gene ID" value="HI_0836"/>
</dbReference>
<dbReference type="KEGG" id="hin:HI_0836"/>
<dbReference type="PATRIC" id="fig|71421.8.peg.877"/>
<dbReference type="eggNOG" id="COG2269">
    <property type="taxonomic scope" value="Bacteria"/>
</dbReference>
<dbReference type="HOGENOM" id="CLU_008255_1_1_6"/>
<dbReference type="OrthoDB" id="9802326at2"/>
<dbReference type="PhylomeDB" id="P43826"/>
<dbReference type="BioCyc" id="HINF71421:G1GJ1-877-MONOMER"/>
<dbReference type="Proteomes" id="UP000000579">
    <property type="component" value="Chromosome"/>
</dbReference>
<dbReference type="GO" id="GO:0005737">
    <property type="term" value="C:cytoplasm"/>
    <property type="evidence" value="ECO:0000318"/>
    <property type="project" value="GO_Central"/>
</dbReference>
<dbReference type="GO" id="GO:0016880">
    <property type="term" value="F:acid-ammonia (or amide) ligase activity"/>
    <property type="evidence" value="ECO:0007669"/>
    <property type="project" value="UniProtKB-UniRule"/>
</dbReference>
<dbReference type="GO" id="GO:0005524">
    <property type="term" value="F:ATP binding"/>
    <property type="evidence" value="ECO:0007669"/>
    <property type="project" value="UniProtKB-UniRule"/>
</dbReference>
<dbReference type="GO" id="GO:0004824">
    <property type="term" value="F:lysine-tRNA ligase activity"/>
    <property type="evidence" value="ECO:0000318"/>
    <property type="project" value="GO_Central"/>
</dbReference>
<dbReference type="GO" id="GO:0000049">
    <property type="term" value="F:tRNA binding"/>
    <property type="evidence" value="ECO:0000318"/>
    <property type="project" value="GO_Central"/>
</dbReference>
<dbReference type="GO" id="GO:0006430">
    <property type="term" value="P:lysyl-tRNA aminoacylation"/>
    <property type="evidence" value="ECO:0000318"/>
    <property type="project" value="GO_Central"/>
</dbReference>
<dbReference type="FunFam" id="3.30.930.10:FF:000017">
    <property type="entry name" value="Elongation factor P--(R)-beta-lysine ligase"/>
    <property type="match status" value="1"/>
</dbReference>
<dbReference type="Gene3D" id="3.30.930.10">
    <property type="entry name" value="Bira Bifunctional Protein, Domain 2"/>
    <property type="match status" value="1"/>
</dbReference>
<dbReference type="HAMAP" id="MF_00174">
    <property type="entry name" value="EF_P_modif_A"/>
    <property type="match status" value="1"/>
</dbReference>
<dbReference type="InterPro" id="IPR004364">
    <property type="entry name" value="Aa-tRNA-synt_II"/>
</dbReference>
<dbReference type="InterPro" id="IPR006195">
    <property type="entry name" value="aa-tRNA-synth_II"/>
</dbReference>
<dbReference type="InterPro" id="IPR045864">
    <property type="entry name" value="aa-tRNA-synth_II/BPL/LPL"/>
</dbReference>
<dbReference type="InterPro" id="IPR004525">
    <property type="entry name" value="EpmA"/>
</dbReference>
<dbReference type="InterPro" id="IPR018149">
    <property type="entry name" value="Lys-tRNA-synth_II_C"/>
</dbReference>
<dbReference type="NCBIfam" id="TIGR00462">
    <property type="entry name" value="genX"/>
    <property type="match status" value="1"/>
</dbReference>
<dbReference type="NCBIfam" id="NF006828">
    <property type="entry name" value="PRK09350.1"/>
    <property type="match status" value="1"/>
</dbReference>
<dbReference type="PANTHER" id="PTHR42918:SF6">
    <property type="entry name" value="ELONGATION FACTOR P--(R)-BETA-LYSINE LIGASE"/>
    <property type="match status" value="1"/>
</dbReference>
<dbReference type="PANTHER" id="PTHR42918">
    <property type="entry name" value="LYSYL-TRNA SYNTHETASE"/>
    <property type="match status" value="1"/>
</dbReference>
<dbReference type="Pfam" id="PF00152">
    <property type="entry name" value="tRNA-synt_2"/>
    <property type="match status" value="1"/>
</dbReference>
<dbReference type="PRINTS" id="PR00982">
    <property type="entry name" value="TRNASYNTHLYS"/>
</dbReference>
<dbReference type="SUPFAM" id="SSF55681">
    <property type="entry name" value="Class II aaRS and biotin synthetases"/>
    <property type="match status" value="1"/>
</dbReference>
<dbReference type="PROSITE" id="PS50862">
    <property type="entry name" value="AA_TRNA_LIGASE_II"/>
    <property type="match status" value="1"/>
</dbReference>
<reference key="1">
    <citation type="journal article" date="1995" name="Science">
        <title>Whole-genome random sequencing and assembly of Haemophilus influenzae Rd.</title>
        <authorList>
            <person name="Fleischmann R.D."/>
            <person name="Adams M.D."/>
            <person name="White O."/>
            <person name="Clayton R.A."/>
            <person name="Kirkness E.F."/>
            <person name="Kerlavage A.R."/>
            <person name="Bult C.J."/>
            <person name="Tomb J.-F."/>
            <person name="Dougherty B.A."/>
            <person name="Merrick J.M."/>
            <person name="McKenney K."/>
            <person name="Sutton G.G."/>
            <person name="FitzHugh W."/>
            <person name="Fields C.A."/>
            <person name="Gocayne J.D."/>
            <person name="Scott J.D."/>
            <person name="Shirley R."/>
            <person name="Liu L.-I."/>
            <person name="Glodek A."/>
            <person name="Kelley J.M."/>
            <person name="Weidman J.F."/>
            <person name="Phillips C.A."/>
            <person name="Spriggs T."/>
            <person name="Hedblom E."/>
            <person name="Cotton M.D."/>
            <person name="Utterback T.R."/>
            <person name="Hanna M.C."/>
            <person name="Nguyen D.T."/>
            <person name="Saudek D.M."/>
            <person name="Brandon R.C."/>
            <person name="Fine L.D."/>
            <person name="Fritchman J.L."/>
            <person name="Fuhrmann J.L."/>
            <person name="Geoghagen N.S.M."/>
            <person name="Gnehm C.L."/>
            <person name="McDonald L.A."/>
            <person name="Small K.V."/>
            <person name="Fraser C.M."/>
            <person name="Smith H.O."/>
            <person name="Venter J.C."/>
        </authorList>
    </citation>
    <scope>NUCLEOTIDE SEQUENCE [LARGE SCALE GENOMIC DNA]</scope>
    <source>
        <strain>ATCC 51907 / DSM 11121 / KW20 / Rd</strain>
    </source>
</reference>
<organism>
    <name type="scientific">Haemophilus influenzae (strain ATCC 51907 / DSM 11121 / KW20 / Rd)</name>
    <dbReference type="NCBI Taxonomy" id="71421"/>
    <lineage>
        <taxon>Bacteria</taxon>
        <taxon>Pseudomonadati</taxon>
        <taxon>Pseudomonadota</taxon>
        <taxon>Gammaproteobacteria</taxon>
        <taxon>Pasteurellales</taxon>
        <taxon>Pasteurellaceae</taxon>
        <taxon>Haemophilus</taxon>
    </lineage>
</organism>
<gene>
    <name evidence="1" type="primary">epmA</name>
    <name type="synonym">genX</name>
    <name type="synonym">yjeA</name>
    <name type="ordered locus">HI_0836</name>
</gene>
<proteinExistence type="inferred from homology"/>
<sequence length="323" mass="37156">MTALNHWQPSADIKNHLKRAKIIAKIRQFFTERGLLEVETPVLSEFGVTDLHLSTFSTEFLAPFGEQSKTLWLSTSPEYHMKRLLAAGSGPIFQISKVFRNEEAGNRHNPEFTMLEWYRPHFHMHRLINEVDDLLQQILDCPPAESLSYQFVFQEYVGLDPLSAERSELIEAARKHNFMAEDNEDRDTLLQFLFSEVVEPQIGKERPIAVYHFPSTQAALAQVSPEDQRVAERFEFYYKGLELANGFHELADAQEQRHRFELDNQQRQKCELPTREIDERFLAALEAGMPDASGVALGIDRLMMIALDCEKINDVISFAVDNA</sequence>
<feature type="chain" id="PRO_0000152724" description="Elongation factor P--(R)-beta-lysine ligase">
    <location>
        <begin position="1"/>
        <end position="323"/>
    </location>
</feature>
<feature type="binding site" evidence="1">
    <location>
        <begin position="76"/>
        <end position="78"/>
    </location>
    <ligand>
        <name>substrate</name>
    </ligand>
</feature>
<feature type="binding site" evidence="1">
    <location>
        <begin position="100"/>
        <end position="102"/>
    </location>
    <ligand>
        <name>ATP</name>
        <dbReference type="ChEBI" id="CHEBI:30616"/>
    </ligand>
</feature>
<feature type="binding site" evidence="1">
    <location>
        <position position="109"/>
    </location>
    <ligand>
        <name>ATP</name>
        <dbReference type="ChEBI" id="CHEBI:30616"/>
    </ligand>
</feature>
<feature type="binding site" evidence="1">
    <location>
        <position position="118"/>
    </location>
    <ligand>
        <name>substrate</name>
    </ligand>
</feature>
<feature type="binding site" evidence="1">
    <location>
        <begin position="242"/>
        <end position="243"/>
    </location>
    <ligand>
        <name>ATP</name>
        <dbReference type="ChEBI" id="CHEBI:30616"/>
    </ligand>
</feature>
<feature type="binding site" evidence="1">
    <location>
        <position position="249"/>
    </location>
    <ligand>
        <name>substrate</name>
    </ligand>
</feature>
<feature type="binding site" evidence="1">
    <location>
        <position position="298"/>
    </location>
    <ligand>
        <name>ATP</name>
        <dbReference type="ChEBI" id="CHEBI:30616"/>
    </ligand>
</feature>
<evidence type="ECO:0000255" key="1">
    <source>
        <dbReference type="HAMAP-Rule" id="MF_00174"/>
    </source>
</evidence>
<evidence type="ECO:0000305" key="2"/>
<name>EPMA_HAEIN</name>
<comment type="function">
    <text evidence="1">With EpmB is involved in the beta-lysylation step of the post-translational modification of translation elongation factor P (EF-P). Catalyzes the ATP-dependent activation of (R)-beta-lysine produced by EpmB, forming a lysyl-adenylate, from which the beta-lysyl moiety is then transferred to the epsilon-amino group of a conserved specific lysine residue in EF-P.</text>
</comment>
<comment type="catalytic activity">
    <reaction evidence="1">
        <text>D-beta-lysine + L-lysyl-[protein] + ATP = N(6)-((3R)-3,6-diaminohexanoyl)-L-lysyl-[protein] + AMP + diphosphate + H(+)</text>
        <dbReference type="Rhea" id="RHEA:83435"/>
        <dbReference type="Rhea" id="RHEA-COMP:9752"/>
        <dbReference type="Rhea" id="RHEA-COMP:20131"/>
        <dbReference type="ChEBI" id="CHEBI:15378"/>
        <dbReference type="ChEBI" id="CHEBI:29969"/>
        <dbReference type="ChEBI" id="CHEBI:30616"/>
        <dbReference type="ChEBI" id="CHEBI:33019"/>
        <dbReference type="ChEBI" id="CHEBI:84138"/>
        <dbReference type="ChEBI" id="CHEBI:156053"/>
        <dbReference type="ChEBI" id="CHEBI:456215"/>
    </reaction>
    <physiologicalReaction direction="left-to-right" evidence="1">
        <dbReference type="Rhea" id="RHEA:83436"/>
    </physiologicalReaction>
</comment>
<comment type="subunit">
    <text evidence="1">Homodimer.</text>
</comment>
<comment type="similarity">
    <text evidence="1">Belongs to the class-II aminoacyl-tRNA synthetase family. EpmA subfamily.</text>
</comment>
<comment type="sequence caution" evidence="2">
    <conflict type="erroneous initiation">
        <sequence resource="EMBL-CDS" id="AAC22494"/>
    </conflict>
    <text>Extended N-terminus.</text>
</comment>
<keyword id="KW-0067">ATP-binding</keyword>
<keyword id="KW-0436">Ligase</keyword>
<keyword id="KW-0547">Nucleotide-binding</keyword>
<keyword id="KW-1185">Reference proteome</keyword>
<accession>P43826</accession>